<gene>
    <name evidence="2" type="primary">nuoB</name>
    <name type="ordered locus">AZC_1668</name>
</gene>
<name>NUOB_AZOC5</name>
<sequence length="192" mass="21181">MTPSATKPLVSEAPKGIIDPSTGRPILSDDPFYKEINAELADKGFLVTTVDDLITWARTGSLMWMTFGLACCAVEMMQVSMPRYDVERFGFAPRASPRQSDVMIVAGTLTNKMAPALRKVYDQMPEPRYVISMGSCANGGGYYHYSYAVVRGCDRVVPVDIYVPGCPPTAEALLYGVLLLQRKIRRTGTIER</sequence>
<accession>A8I3Y7</accession>
<protein>
    <recommendedName>
        <fullName evidence="2">NADH-quinone oxidoreductase subunit B</fullName>
        <ecNumber evidence="2">7.1.1.-</ecNumber>
    </recommendedName>
    <alternativeName>
        <fullName evidence="2">NADH dehydrogenase I subunit B</fullName>
    </alternativeName>
    <alternativeName>
        <fullName evidence="2">NDH-1 subunit B</fullName>
    </alternativeName>
</protein>
<reference key="1">
    <citation type="submission" date="2007-04" db="EMBL/GenBank/DDBJ databases">
        <title>Complete genome sequence of the nitrogen-fixing bacterium Azorhizobium caulinodans ORS571.</title>
        <authorList>
            <person name="Lee K.B."/>
            <person name="Backer P.D."/>
            <person name="Aono T."/>
            <person name="Liu C.T."/>
            <person name="Suzuki S."/>
            <person name="Suzuki T."/>
            <person name="Kaneko T."/>
            <person name="Yamada M."/>
            <person name="Tabata S."/>
            <person name="Kupfer D.M."/>
            <person name="Najar F.Z."/>
            <person name="Wiley G.B."/>
            <person name="Roe B."/>
            <person name="Binnewies T."/>
            <person name="Ussery D."/>
            <person name="Vereecke D."/>
            <person name="Gevers D."/>
            <person name="Holsters M."/>
            <person name="Oyaizu H."/>
        </authorList>
    </citation>
    <scope>NUCLEOTIDE SEQUENCE [LARGE SCALE GENOMIC DNA]</scope>
    <source>
        <strain>ATCC 43989 / DSM 5975 / JCM 20966 / LMG 6465 / NBRC 14845 / NCIMB 13405 / ORS 571</strain>
    </source>
</reference>
<keyword id="KW-0004">4Fe-4S</keyword>
<keyword id="KW-0997">Cell inner membrane</keyword>
<keyword id="KW-1003">Cell membrane</keyword>
<keyword id="KW-0408">Iron</keyword>
<keyword id="KW-0411">Iron-sulfur</keyword>
<keyword id="KW-0472">Membrane</keyword>
<keyword id="KW-0479">Metal-binding</keyword>
<keyword id="KW-0520">NAD</keyword>
<keyword id="KW-0874">Quinone</keyword>
<keyword id="KW-1185">Reference proteome</keyword>
<keyword id="KW-1278">Translocase</keyword>
<keyword id="KW-0813">Transport</keyword>
<keyword id="KW-0830">Ubiquinone</keyword>
<dbReference type="EC" id="7.1.1.-" evidence="2"/>
<dbReference type="EMBL" id="AP009384">
    <property type="protein sequence ID" value="BAF87666.1"/>
    <property type="molecule type" value="Genomic_DNA"/>
</dbReference>
<dbReference type="SMR" id="A8I3Y7"/>
<dbReference type="STRING" id="438753.AZC_1668"/>
<dbReference type="KEGG" id="azc:AZC_1668"/>
<dbReference type="eggNOG" id="COG0377">
    <property type="taxonomic scope" value="Bacteria"/>
</dbReference>
<dbReference type="HOGENOM" id="CLU_055737_7_3_5"/>
<dbReference type="Proteomes" id="UP000000270">
    <property type="component" value="Chromosome"/>
</dbReference>
<dbReference type="GO" id="GO:0005886">
    <property type="term" value="C:plasma membrane"/>
    <property type="evidence" value="ECO:0007669"/>
    <property type="project" value="UniProtKB-SubCell"/>
</dbReference>
<dbReference type="GO" id="GO:0045271">
    <property type="term" value="C:respiratory chain complex I"/>
    <property type="evidence" value="ECO:0007669"/>
    <property type="project" value="TreeGrafter"/>
</dbReference>
<dbReference type="GO" id="GO:0051539">
    <property type="term" value="F:4 iron, 4 sulfur cluster binding"/>
    <property type="evidence" value="ECO:0007669"/>
    <property type="project" value="UniProtKB-KW"/>
</dbReference>
<dbReference type="GO" id="GO:0005506">
    <property type="term" value="F:iron ion binding"/>
    <property type="evidence" value="ECO:0007669"/>
    <property type="project" value="UniProtKB-UniRule"/>
</dbReference>
<dbReference type="GO" id="GO:0008137">
    <property type="term" value="F:NADH dehydrogenase (ubiquinone) activity"/>
    <property type="evidence" value="ECO:0007669"/>
    <property type="project" value="InterPro"/>
</dbReference>
<dbReference type="GO" id="GO:0050136">
    <property type="term" value="F:NADH:ubiquinone reductase (non-electrogenic) activity"/>
    <property type="evidence" value="ECO:0007669"/>
    <property type="project" value="UniProtKB-UniRule"/>
</dbReference>
<dbReference type="GO" id="GO:0048038">
    <property type="term" value="F:quinone binding"/>
    <property type="evidence" value="ECO:0007669"/>
    <property type="project" value="UniProtKB-KW"/>
</dbReference>
<dbReference type="GO" id="GO:0009060">
    <property type="term" value="P:aerobic respiration"/>
    <property type="evidence" value="ECO:0007669"/>
    <property type="project" value="TreeGrafter"/>
</dbReference>
<dbReference type="GO" id="GO:0015990">
    <property type="term" value="P:electron transport coupled proton transport"/>
    <property type="evidence" value="ECO:0007669"/>
    <property type="project" value="TreeGrafter"/>
</dbReference>
<dbReference type="FunFam" id="3.40.50.12280:FF:000001">
    <property type="entry name" value="NADH-quinone oxidoreductase subunit B 2"/>
    <property type="match status" value="1"/>
</dbReference>
<dbReference type="Gene3D" id="3.40.50.12280">
    <property type="match status" value="1"/>
</dbReference>
<dbReference type="HAMAP" id="MF_01356">
    <property type="entry name" value="NDH1_NuoB"/>
    <property type="match status" value="1"/>
</dbReference>
<dbReference type="InterPro" id="IPR006137">
    <property type="entry name" value="NADH_UbQ_OxRdtase-like_20kDa"/>
</dbReference>
<dbReference type="InterPro" id="IPR006138">
    <property type="entry name" value="NADH_UQ_OxRdtase_20Kd_su"/>
</dbReference>
<dbReference type="NCBIfam" id="TIGR01957">
    <property type="entry name" value="nuoB_fam"/>
    <property type="match status" value="1"/>
</dbReference>
<dbReference type="NCBIfam" id="NF005012">
    <property type="entry name" value="PRK06411.1"/>
    <property type="match status" value="1"/>
</dbReference>
<dbReference type="PANTHER" id="PTHR11995">
    <property type="entry name" value="NADH DEHYDROGENASE"/>
    <property type="match status" value="1"/>
</dbReference>
<dbReference type="PANTHER" id="PTHR11995:SF14">
    <property type="entry name" value="NADH DEHYDROGENASE [UBIQUINONE] IRON-SULFUR PROTEIN 7, MITOCHONDRIAL"/>
    <property type="match status" value="1"/>
</dbReference>
<dbReference type="Pfam" id="PF01058">
    <property type="entry name" value="Oxidored_q6"/>
    <property type="match status" value="1"/>
</dbReference>
<dbReference type="SUPFAM" id="SSF56770">
    <property type="entry name" value="HydA/Nqo6-like"/>
    <property type="match status" value="1"/>
</dbReference>
<dbReference type="PROSITE" id="PS01150">
    <property type="entry name" value="COMPLEX1_20K"/>
    <property type="match status" value="1"/>
</dbReference>
<evidence type="ECO:0000250" key="1"/>
<evidence type="ECO:0000255" key="2">
    <source>
        <dbReference type="HAMAP-Rule" id="MF_01356"/>
    </source>
</evidence>
<proteinExistence type="inferred from homology"/>
<comment type="function">
    <text evidence="1">NDH-1 shuttles electrons from NADH, via FMN and iron-sulfur (Fe-S) centers, to quinones in the respiratory chain. Couples the redox reaction to proton translocation (for every two electrons transferred, four hydrogen ions are translocated across the cytoplasmic membrane), and thus conserves the redox energy in a proton gradient (By similarity).</text>
</comment>
<comment type="catalytic activity">
    <reaction evidence="2">
        <text>a quinone + NADH + 5 H(+)(in) = a quinol + NAD(+) + 4 H(+)(out)</text>
        <dbReference type="Rhea" id="RHEA:57888"/>
        <dbReference type="ChEBI" id="CHEBI:15378"/>
        <dbReference type="ChEBI" id="CHEBI:24646"/>
        <dbReference type="ChEBI" id="CHEBI:57540"/>
        <dbReference type="ChEBI" id="CHEBI:57945"/>
        <dbReference type="ChEBI" id="CHEBI:132124"/>
    </reaction>
</comment>
<comment type="cofactor">
    <cofactor evidence="2">
        <name>[4Fe-4S] cluster</name>
        <dbReference type="ChEBI" id="CHEBI:49883"/>
    </cofactor>
    <text evidence="2">Binds 1 [4Fe-4S] cluster.</text>
</comment>
<comment type="subunit">
    <text evidence="2">NDH-1 is composed of 14 different subunits. Subunits NuoB, C, D, E, F, and G constitute the peripheral sector of the complex.</text>
</comment>
<comment type="subcellular location">
    <subcellularLocation>
        <location evidence="2">Cell inner membrane</location>
        <topology evidence="2">Peripheral membrane protein</topology>
        <orientation evidence="2">Cytoplasmic side</orientation>
    </subcellularLocation>
</comment>
<comment type="similarity">
    <text evidence="2">Belongs to the complex I 20 kDa subunit family.</text>
</comment>
<organism>
    <name type="scientific">Azorhizobium caulinodans (strain ATCC 43989 / DSM 5975 / JCM 20966 / LMG 6465 / NBRC 14845 / NCIMB 13405 / ORS 571)</name>
    <dbReference type="NCBI Taxonomy" id="438753"/>
    <lineage>
        <taxon>Bacteria</taxon>
        <taxon>Pseudomonadati</taxon>
        <taxon>Pseudomonadota</taxon>
        <taxon>Alphaproteobacteria</taxon>
        <taxon>Hyphomicrobiales</taxon>
        <taxon>Xanthobacteraceae</taxon>
        <taxon>Azorhizobium</taxon>
    </lineage>
</organism>
<feature type="chain" id="PRO_0000358349" description="NADH-quinone oxidoreductase subunit B">
    <location>
        <begin position="1"/>
        <end position="192"/>
    </location>
</feature>
<feature type="binding site" evidence="2">
    <location>
        <position position="71"/>
    </location>
    <ligand>
        <name>[4Fe-4S] cluster</name>
        <dbReference type="ChEBI" id="CHEBI:49883"/>
    </ligand>
</feature>
<feature type="binding site" evidence="2">
    <location>
        <position position="72"/>
    </location>
    <ligand>
        <name>[4Fe-4S] cluster</name>
        <dbReference type="ChEBI" id="CHEBI:49883"/>
    </ligand>
</feature>
<feature type="binding site" evidence="2">
    <location>
        <position position="136"/>
    </location>
    <ligand>
        <name>[4Fe-4S] cluster</name>
        <dbReference type="ChEBI" id="CHEBI:49883"/>
    </ligand>
</feature>
<feature type="binding site" evidence="2">
    <location>
        <position position="166"/>
    </location>
    <ligand>
        <name>[4Fe-4S] cluster</name>
        <dbReference type="ChEBI" id="CHEBI:49883"/>
    </ligand>
</feature>